<reference key="1">
    <citation type="journal article" date="1991" name="Biochem. J.">
        <title>Expression of a cDNA clone encoding the haem-binding domain of Chlorella nitrate reductase.</title>
        <authorList>
            <person name="Cannons A.C."/>
            <person name="Iida N."/>
            <person name="Solomonson L.P."/>
        </authorList>
    </citation>
    <scope>NUCLEOTIDE SEQUENCE [MRNA]</scope>
</reference>
<keyword id="KW-0274">FAD</keyword>
<keyword id="KW-0285">Flavoprotein</keyword>
<keyword id="KW-0349">Heme</keyword>
<keyword id="KW-0408">Iron</keyword>
<keyword id="KW-0479">Metal-binding</keyword>
<keyword id="KW-0500">Molybdenum</keyword>
<keyword id="KW-0520">NAD</keyword>
<keyword id="KW-0534">Nitrate assimilation</keyword>
<keyword id="KW-0560">Oxidoreductase</keyword>
<accession>Q01170</accession>
<comment type="function">
    <text>Nitrate reductase is a key enzyme involved in the first step of nitrate assimilation in plants, fungi and bacteria.</text>
</comment>
<comment type="catalytic activity">
    <reaction>
        <text>nitrite + NAD(+) + H2O = nitrate + NADH + H(+)</text>
        <dbReference type="Rhea" id="RHEA:17913"/>
        <dbReference type="ChEBI" id="CHEBI:15377"/>
        <dbReference type="ChEBI" id="CHEBI:15378"/>
        <dbReference type="ChEBI" id="CHEBI:16301"/>
        <dbReference type="ChEBI" id="CHEBI:17632"/>
        <dbReference type="ChEBI" id="CHEBI:57540"/>
        <dbReference type="ChEBI" id="CHEBI:57945"/>
        <dbReference type="EC" id="1.7.1.1"/>
    </reaction>
</comment>
<comment type="cofactor">
    <cofactor evidence="1">
        <name>FAD</name>
        <dbReference type="ChEBI" id="CHEBI:57692"/>
    </cofactor>
    <text evidence="1">Binds 1 FAD per subunit.</text>
</comment>
<comment type="cofactor">
    <cofactor evidence="1">
        <name>heme</name>
        <dbReference type="ChEBI" id="CHEBI:30413"/>
    </cofactor>
    <text evidence="1">Binds 1 heme group per subunit.</text>
</comment>
<comment type="cofactor">
    <cofactor evidence="1">
        <name>Mo-molybdopterin</name>
        <dbReference type="ChEBI" id="CHEBI:71302"/>
    </cofactor>
    <text evidence="1">Binds 1 Mo-molybdopterin (Mo-MPT) cofactor per subunit.</text>
</comment>
<comment type="subunit">
    <text>Homodimer.</text>
</comment>
<comment type="similarity">
    <text evidence="3">Belongs to the nitrate reductase family.</text>
</comment>
<feature type="chain" id="PRO_0000166053" description="Nitrate reductase [NADH]">
    <location>
        <begin position="1" status="less than"/>
        <end position="318" status="greater than"/>
    </location>
</feature>
<feature type="domain" description="Cytochrome b5 heme-binding" evidence="2">
    <location>
        <begin position="216"/>
        <end position="291"/>
    </location>
</feature>
<feature type="binding site" description="axial binding residue" evidence="2">
    <location>
        <position position="251"/>
    </location>
    <ligand>
        <name>heme</name>
        <dbReference type="ChEBI" id="CHEBI:30413"/>
    </ligand>
    <ligandPart>
        <name>Fe</name>
        <dbReference type="ChEBI" id="CHEBI:18248"/>
    </ligandPart>
</feature>
<feature type="binding site" description="axial binding residue" evidence="2">
    <location>
        <position position="274"/>
    </location>
    <ligand>
        <name>heme</name>
        <dbReference type="ChEBI" id="CHEBI:30413"/>
    </ligand>
    <ligandPart>
        <name>Fe</name>
        <dbReference type="ChEBI" id="CHEBI:18248"/>
    </ligandPart>
</feature>
<feature type="non-terminal residue">
    <location>
        <position position="1"/>
    </location>
</feature>
<feature type="non-terminal residue">
    <location>
        <position position="318"/>
    </location>
</feature>
<name>NIA_CHLVU</name>
<proteinExistence type="evidence at transcript level"/>
<evidence type="ECO:0000250" key="1"/>
<evidence type="ECO:0000255" key="2">
    <source>
        <dbReference type="PROSITE-ProRule" id="PRU00279"/>
    </source>
</evidence>
<evidence type="ECO:0000305" key="3"/>
<dbReference type="EC" id="1.7.1.1"/>
<dbReference type="EMBL" id="X56771">
    <property type="protein sequence ID" value="CAA40090.1"/>
    <property type="molecule type" value="mRNA"/>
</dbReference>
<dbReference type="PIR" id="S17197">
    <property type="entry name" value="S17197"/>
</dbReference>
<dbReference type="SMR" id="Q01170"/>
<dbReference type="GO" id="GO:0020037">
    <property type="term" value="F:heme binding"/>
    <property type="evidence" value="ECO:0007669"/>
    <property type="project" value="InterPro"/>
</dbReference>
<dbReference type="GO" id="GO:0030151">
    <property type="term" value="F:molybdenum ion binding"/>
    <property type="evidence" value="ECO:0007669"/>
    <property type="project" value="InterPro"/>
</dbReference>
<dbReference type="GO" id="GO:0043546">
    <property type="term" value="F:molybdopterin cofactor binding"/>
    <property type="evidence" value="ECO:0007669"/>
    <property type="project" value="TreeGrafter"/>
</dbReference>
<dbReference type="GO" id="GO:0009703">
    <property type="term" value="F:nitrate reductase (NADH) activity"/>
    <property type="evidence" value="ECO:0007669"/>
    <property type="project" value="UniProtKB-EC"/>
</dbReference>
<dbReference type="GO" id="GO:0008482">
    <property type="term" value="F:sulfite oxidase activity"/>
    <property type="evidence" value="ECO:0007669"/>
    <property type="project" value="TreeGrafter"/>
</dbReference>
<dbReference type="GO" id="GO:0042128">
    <property type="term" value="P:nitrate assimilation"/>
    <property type="evidence" value="ECO:0007669"/>
    <property type="project" value="UniProtKB-KW"/>
</dbReference>
<dbReference type="GO" id="GO:0006790">
    <property type="term" value="P:sulfur compound metabolic process"/>
    <property type="evidence" value="ECO:0007669"/>
    <property type="project" value="TreeGrafter"/>
</dbReference>
<dbReference type="Gene3D" id="2.60.40.650">
    <property type="match status" value="1"/>
</dbReference>
<dbReference type="Gene3D" id="3.10.120.10">
    <property type="entry name" value="Cytochrome b5-like heme/steroid binding domain"/>
    <property type="match status" value="1"/>
</dbReference>
<dbReference type="InterPro" id="IPR001199">
    <property type="entry name" value="Cyt_B5-like_heme/steroid-bd"/>
</dbReference>
<dbReference type="InterPro" id="IPR036400">
    <property type="entry name" value="Cyt_B5-like_heme/steroid_sf"/>
</dbReference>
<dbReference type="InterPro" id="IPR018506">
    <property type="entry name" value="Cyt_B5_heme-BS"/>
</dbReference>
<dbReference type="InterPro" id="IPR014756">
    <property type="entry name" value="Ig_E-set"/>
</dbReference>
<dbReference type="InterPro" id="IPR005066">
    <property type="entry name" value="MoCF_OxRdtse_dimer"/>
</dbReference>
<dbReference type="InterPro" id="IPR008335">
    <property type="entry name" value="Mopterin_OxRdtase_euk"/>
</dbReference>
<dbReference type="PANTHER" id="PTHR19372:SF7">
    <property type="entry name" value="SULFITE OXIDASE, MITOCHONDRIAL"/>
    <property type="match status" value="1"/>
</dbReference>
<dbReference type="PANTHER" id="PTHR19372">
    <property type="entry name" value="SULFITE REDUCTASE"/>
    <property type="match status" value="1"/>
</dbReference>
<dbReference type="Pfam" id="PF00173">
    <property type="entry name" value="Cyt-b5"/>
    <property type="match status" value="1"/>
</dbReference>
<dbReference type="Pfam" id="PF03404">
    <property type="entry name" value="Mo-co_dimer"/>
    <property type="match status" value="1"/>
</dbReference>
<dbReference type="PRINTS" id="PR00363">
    <property type="entry name" value="CYTOCHROMEB5"/>
</dbReference>
<dbReference type="PRINTS" id="PR00407">
    <property type="entry name" value="EUMOPTERIN"/>
</dbReference>
<dbReference type="SMART" id="SM01117">
    <property type="entry name" value="Cyt-b5"/>
    <property type="match status" value="1"/>
</dbReference>
<dbReference type="SUPFAM" id="SSF55856">
    <property type="entry name" value="Cytochrome b5-like heme/steroid binding domain"/>
    <property type="match status" value="1"/>
</dbReference>
<dbReference type="SUPFAM" id="SSF81296">
    <property type="entry name" value="E set domains"/>
    <property type="match status" value="1"/>
</dbReference>
<dbReference type="PROSITE" id="PS00191">
    <property type="entry name" value="CYTOCHROME_B5_1"/>
    <property type="match status" value="1"/>
</dbReference>
<dbReference type="PROSITE" id="PS50255">
    <property type="entry name" value="CYTOCHROME_B5_2"/>
    <property type="match status" value="1"/>
</dbReference>
<sequence length="318" mass="34830">RPPVTEVESQNYYHFHDNRVLPSHVDEALANSEGWWYKPDFIINDLNVQSAIGYPAHEEVVPLVAGTYAVRGYARGHGNKIIRCEVSLDDGKSWRLGSVTHEGQPTEYGKHWGWVWWSLEVPIAELLTTPEIICRAWDSSMNTQPNTFTWNVMGMMNNCCYRVKIHPRQTTDGRFALQFEHPTIAGPTVGGWMNRAEDVAAAAAVTVAPPPAPAGAKSFTMAEVETHTTMESAWFVVDGKVYDATPFLKDHPGGADSILLVAGIDATDEFNAIHSLKAKKQLLEYYIGELAEEGQEAAASDRATPGPAAAIGTAVPVA</sequence>
<organism>
    <name type="scientific">Chlorella vulgaris</name>
    <name type="common">Green alga</name>
    <dbReference type="NCBI Taxonomy" id="3077"/>
    <lineage>
        <taxon>Eukaryota</taxon>
        <taxon>Viridiplantae</taxon>
        <taxon>Chlorophyta</taxon>
        <taxon>core chlorophytes</taxon>
        <taxon>Trebouxiophyceae</taxon>
        <taxon>Chlorellales</taxon>
        <taxon>Chlorellaceae</taxon>
        <taxon>Chlorella clade</taxon>
        <taxon>Chlorella</taxon>
    </lineage>
</organism>
<protein>
    <recommendedName>
        <fullName>Nitrate reductase [NADH]</fullName>
        <shortName>NR</shortName>
        <ecNumber>1.7.1.1</ecNumber>
    </recommendedName>
</protein>